<keyword id="KW-1003">Cell membrane</keyword>
<keyword id="KW-0444">Lipid biosynthesis</keyword>
<keyword id="KW-0443">Lipid metabolism</keyword>
<keyword id="KW-0472">Membrane</keyword>
<keyword id="KW-0594">Phospholipid biosynthesis</keyword>
<keyword id="KW-1208">Phospholipid metabolism</keyword>
<keyword id="KW-0808">Transferase</keyword>
<keyword id="KW-0812">Transmembrane</keyword>
<keyword id="KW-1133">Transmembrane helix</keyword>
<dbReference type="EC" id="2.3.1.275" evidence="1"/>
<dbReference type="EMBL" id="CP000123">
    <property type="protein sequence ID" value="ABC01724.1"/>
    <property type="molecule type" value="Genomic_DNA"/>
</dbReference>
<dbReference type="SMR" id="Q2SSZ9"/>
<dbReference type="KEGG" id="mcp:MCAP_0122"/>
<dbReference type="HOGENOM" id="CLU_081254_3_0_14"/>
<dbReference type="PhylomeDB" id="Q2SSZ9"/>
<dbReference type="UniPathway" id="UPA00085"/>
<dbReference type="Proteomes" id="UP000001928">
    <property type="component" value="Chromosome"/>
</dbReference>
<dbReference type="GO" id="GO:0005886">
    <property type="term" value="C:plasma membrane"/>
    <property type="evidence" value="ECO:0007669"/>
    <property type="project" value="UniProtKB-SubCell"/>
</dbReference>
<dbReference type="GO" id="GO:0043772">
    <property type="term" value="F:acyl-phosphate glycerol-3-phosphate acyltransferase activity"/>
    <property type="evidence" value="ECO:0007669"/>
    <property type="project" value="UniProtKB-UniRule"/>
</dbReference>
<dbReference type="GO" id="GO:0008654">
    <property type="term" value="P:phospholipid biosynthetic process"/>
    <property type="evidence" value="ECO:0007669"/>
    <property type="project" value="UniProtKB-UniRule"/>
</dbReference>
<dbReference type="HAMAP" id="MF_01043">
    <property type="entry name" value="PlsY"/>
    <property type="match status" value="1"/>
</dbReference>
<dbReference type="InterPro" id="IPR003811">
    <property type="entry name" value="G3P_acylTferase_PlsY"/>
</dbReference>
<dbReference type="NCBIfam" id="TIGR00023">
    <property type="entry name" value="glycerol-3-phosphate 1-O-acyltransferase PlsY"/>
    <property type="match status" value="1"/>
</dbReference>
<dbReference type="NCBIfam" id="NF010976">
    <property type="entry name" value="PRK14399.1"/>
    <property type="match status" value="1"/>
</dbReference>
<dbReference type="PANTHER" id="PTHR30309:SF0">
    <property type="entry name" value="GLYCEROL-3-PHOSPHATE ACYLTRANSFERASE-RELATED"/>
    <property type="match status" value="1"/>
</dbReference>
<dbReference type="PANTHER" id="PTHR30309">
    <property type="entry name" value="INNER MEMBRANE PROTEIN YGIH"/>
    <property type="match status" value="1"/>
</dbReference>
<dbReference type="Pfam" id="PF02660">
    <property type="entry name" value="G3P_acyltransf"/>
    <property type="match status" value="1"/>
</dbReference>
<dbReference type="SMART" id="SM01207">
    <property type="entry name" value="G3P_acyltransf"/>
    <property type="match status" value="1"/>
</dbReference>
<proteinExistence type="inferred from homology"/>
<organism>
    <name type="scientific">Mycoplasma capricolum subsp. capricolum (strain California kid / ATCC 27343 / NCTC 10154)</name>
    <dbReference type="NCBI Taxonomy" id="340047"/>
    <lineage>
        <taxon>Bacteria</taxon>
        <taxon>Bacillati</taxon>
        <taxon>Mycoplasmatota</taxon>
        <taxon>Mollicutes</taxon>
        <taxon>Mycoplasmataceae</taxon>
        <taxon>Mycoplasma</taxon>
    </lineage>
</organism>
<comment type="function">
    <text evidence="1">Catalyzes the transfer of an acyl group from acyl-phosphate (acyl-PO(4)) to glycerol-3-phosphate (G3P) to form lysophosphatidic acid (LPA). This enzyme utilizes acyl-phosphate as fatty acyl donor, but not acyl-CoA or acyl-ACP.</text>
</comment>
<comment type="catalytic activity">
    <reaction evidence="1">
        <text>an acyl phosphate + sn-glycerol 3-phosphate = a 1-acyl-sn-glycero-3-phosphate + phosphate</text>
        <dbReference type="Rhea" id="RHEA:34075"/>
        <dbReference type="ChEBI" id="CHEBI:43474"/>
        <dbReference type="ChEBI" id="CHEBI:57597"/>
        <dbReference type="ChEBI" id="CHEBI:57970"/>
        <dbReference type="ChEBI" id="CHEBI:59918"/>
        <dbReference type="EC" id="2.3.1.275"/>
    </reaction>
</comment>
<comment type="pathway">
    <text evidence="1">Lipid metabolism; phospholipid metabolism.</text>
</comment>
<comment type="subunit">
    <text evidence="1">Probably interacts with PlsX.</text>
</comment>
<comment type="subcellular location">
    <subcellularLocation>
        <location evidence="1">Cell membrane</location>
        <topology evidence="1">Multi-pass membrane protein</topology>
    </subcellularLocation>
</comment>
<comment type="similarity">
    <text evidence="1">Belongs to the PlsY family.</text>
</comment>
<reference key="1">
    <citation type="submission" date="2005-09" db="EMBL/GenBank/DDBJ databases">
        <authorList>
            <person name="Glass J.I."/>
            <person name="Lartigue C."/>
            <person name="Pfannkoch C."/>
            <person name="Baden-Tillson H."/>
            <person name="Smith H.O."/>
            <person name="Venter J.C."/>
            <person name="Roske K."/>
            <person name="Wise K.S."/>
            <person name="Calcutt M.J."/>
            <person name="Nelson W.C."/>
            <person name="Nierman W.C."/>
        </authorList>
    </citation>
    <scope>NUCLEOTIDE SEQUENCE [LARGE SCALE GENOMIC DNA]</scope>
    <source>
        <strain>California kid / ATCC 27343 / NCTC 10154</strain>
    </source>
</reference>
<evidence type="ECO:0000255" key="1">
    <source>
        <dbReference type="HAMAP-Rule" id="MF_01043"/>
    </source>
</evidence>
<gene>
    <name evidence="1" type="primary">plsY</name>
    <name type="ordered locus">MCAP_0122</name>
</gene>
<feature type="chain" id="PRO_0000250313" description="Glycerol-3-phosphate acyltransferase">
    <location>
        <begin position="1"/>
        <end position="259"/>
    </location>
</feature>
<feature type="transmembrane region" description="Helical" evidence="1">
    <location>
        <begin position="11"/>
        <end position="31"/>
    </location>
</feature>
<feature type="transmembrane region" description="Helical" evidence="1">
    <location>
        <begin position="62"/>
        <end position="82"/>
    </location>
</feature>
<feature type="transmembrane region" description="Helical" evidence="1">
    <location>
        <begin position="93"/>
        <end position="112"/>
    </location>
</feature>
<feature type="transmembrane region" description="Helical" evidence="1">
    <location>
        <begin position="124"/>
        <end position="144"/>
    </location>
</feature>
<feature type="transmembrane region" description="Helical" evidence="1">
    <location>
        <begin position="152"/>
        <end position="172"/>
    </location>
</feature>
<feature type="transmembrane region" description="Helical" evidence="1">
    <location>
        <begin position="188"/>
        <end position="208"/>
    </location>
</feature>
<feature type="transmembrane region" description="Helical" evidence="1">
    <location>
        <begin position="211"/>
        <end position="231"/>
    </location>
</feature>
<accession>Q2SSZ9</accession>
<sequence length="259" mass="29244">MKGFYMYYLGIILASVVGYFLGSISWSIIIVKKVGNIDIRTIGSGNPGATNTVRALGKKWGLVVAFLDALKVIFTSIIAILLSLIPSSLFSQTSYFIPCIFALIGHCFPIYYKFKGGKAVSCFLGLLFVVNILYLIIFLIVWFISVAISRKVSVASIFSAFFVLIIMWIPYLNGVSYFIWQWNGLEQFSVAWKNYILFSLLNSFHYWFSNIWASGMLEGNIIVLIGGLILGLRHSQNIKRIKNKTEPDTFPRKKQAIKN</sequence>
<protein>
    <recommendedName>
        <fullName evidence="1">Glycerol-3-phosphate acyltransferase</fullName>
    </recommendedName>
    <alternativeName>
        <fullName evidence="1">Acyl-PO4 G3P acyltransferase</fullName>
    </alternativeName>
    <alternativeName>
        <fullName evidence="1">Acyl-phosphate--glycerol-3-phosphate acyltransferase</fullName>
    </alternativeName>
    <alternativeName>
        <fullName evidence="1">G3P acyltransferase</fullName>
        <shortName evidence="1">GPAT</shortName>
        <ecNumber evidence="1">2.3.1.275</ecNumber>
    </alternativeName>
    <alternativeName>
        <fullName evidence="1">Lysophosphatidic acid synthase</fullName>
        <shortName evidence="1">LPA synthase</shortName>
    </alternativeName>
</protein>
<name>PLSY_MYCCT</name>